<comment type="function">
    <text evidence="1 8 9 11 14">Cytosolic dehydrogenase that catalyzes the irreversible oxidation of a wide range of aldehydes to their corresponding carboxylic acid (PubMed:12851412). Functions downstream of retinol dehydrogenases and catalyzes the oxidation of retinaldehyde into retinoic acid, the second step in the oxidation of retinol/vitamin A into retinoic acid (PubMed:12851412). This pathway is crucial to control the levels of retinol and retinoic acid, two important molecules which excess can be teratogenic and cytotoxic (Probable). Also oxidizes aldehydes resulting from lipid peroxidation like (E)-4-hydroxynon-2-enal/HNE, malonaldehyde and hexanal that form protein adducts and are highly cytotoxic. By participating for instance to the clearance of (E)-4-hydroxynon-2-enal/HNE in the lens epithelium prevents the formation of HNE-protein adducts and lens opacification (PubMed:17567582). Also functions downstream of fructosamine-3-kinase in the fructosamine degradation pathway by catalyzing the oxidation of 3-deoxyglucosone, the carbohydrate product of fructosamine 3-phosphate decomposition, which is itself a potent glycating agent that may react with lysine and arginine side-chains of proteins (By similarity). Also has an aminobutyraldehyde dehydrogenase activity and is probably part of an alternative pathway for the biosynthesis of GABA/4-aminobutanoate in midbrain, thereby playing a role in GABAergic synaptic transmission (PubMed:26430123).</text>
</comment>
<comment type="catalytic activity">
    <reaction evidence="8">
        <text>an aldehyde + NAD(+) + H2O = a carboxylate + NADH + 2 H(+)</text>
        <dbReference type="Rhea" id="RHEA:16185"/>
        <dbReference type="ChEBI" id="CHEBI:15377"/>
        <dbReference type="ChEBI" id="CHEBI:15378"/>
        <dbReference type="ChEBI" id="CHEBI:17478"/>
        <dbReference type="ChEBI" id="CHEBI:29067"/>
        <dbReference type="ChEBI" id="CHEBI:57540"/>
        <dbReference type="ChEBI" id="CHEBI:57945"/>
        <dbReference type="EC" id="1.2.1.3"/>
    </reaction>
    <physiologicalReaction direction="left-to-right" evidence="14">
        <dbReference type="Rhea" id="RHEA:16186"/>
    </physiologicalReaction>
</comment>
<comment type="catalytic activity">
    <reaction evidence="8">
        <text>all-trans-retinal + NAD(+) + H2O = all-trans-retinoate + NADH + 2 H(+)</text>
        <dbReference type="Rhea" id="RHEA:42080"/>
        <dbReference type="ChEBI" id="CHEBI:15377"/>
        <dbReference type="ChEBI" id="CHEBI:15378"/>
        <dbReference type="ChEBI" id="CHEBI:17898"/>
        <dbReference type="ChEBI" id="CHEBI:35291"/>
        <dbReference type="ChEBI" id="CHEBI:57540"/>
        <dbReference type="ChEBI" id="CHEBI:57945"/>
        <dbReference type="EC" id="1.2.1.36"/>
    </reaction>
    <physiologicalReaction direction="left-to-right" evidence="8">
        <dbReference type="Rhea" id="RHEA:42081"/>
    </physiologicalReaction>
</comment>
<comment type="catalytic activity">
    <reaction evidence="14">
        <text>9-cis-retinal + NAD(+) + H2O = 9-cis-retinoate + NADH + 2 H(+)</text>
        <dbReference type="Rhea" id="RHEA:42084"/>
        <dbReference type="ChEBI" id="CHEBI:15377"/>
        <dbReference type="ChEBI" id="CHEBI:15378"/>
        <dbReference type="ChEBI" id="CHEBI:57540"/>
        <dbReference type="ChEBI" id="CHEBI:57945"/>
        <dbReference type="ChEBI" id="CHEBI:78273"/>
        <dbReference type="ChEBI" id="CHEBI:78630"/>
    </reaction>
    <physiologicalReaction direction="left-to-right" evidence="14">
        <dbReference type="Rhea" id="RHEA:42085"/>
    </physiologicalReaction>
</comment>
<comment type="catalytic activity">
    <reaction evidence="14">
        <text>11-cis-retinal + NAD(+) + H2O = 11-cis-retinoate + NADH + 2 H(+)</text>
        <dbReference type="Rhea" id="RHEA:47132"/>
        <dbReference type="ChEBI" id="CHEBI:15377"/>
        <dbReference type="ChEBI" id="CHEBI:15378"/>
        <dbReference type="ChEBI" id="CHEBI:16066"/>
        <dbReference type="ChEBI" id="CHEBI:57540"/>
        <dbReference type="ChEBI" id="CHEBI:57945"/>
        <dbReference type="ChEBI" id="CHEBI:87435"/>
    </reaction>
    <physiologicalReaction direction="left-to-right" evidence="14">
        <dbReference type="Rhea" id="RHEA:47133"/>
    </physiologicalReaction>
</comment>
<comment type="catalytic activity">
    <reaction evidence="5">
        <text>13-cis-retinal + NAD(+) + H2O = 13-cis-retinoate + NADH + 2 H(+)</text>
        <dbReference type="Rhea" id="RHEA:67332"/>
        <dbReference type="ChEBI" id="CHEBI:15377"/>
        <dbReference type="ChEBI" id="CHEBI:15378"/>
        <dbReference type="ChEBI" id="CHEBI:45487"/>
        <dbReference type="ChEBI" id="CHEBI:57540"/>
        <dbReference type="ChEBI" id="CHEBI:57945"/>
        <dbReference type="ChEBI" id="CHEBI:169952"/>
    </reaction>
    <physiologicalReaction direction="left-to-right" evidence="5">
        <dbReference type="Rhea" id="RHEA:67333"/>
    </physiologicalReaction>
</comment>
<comment type="catalytic activity">
    <reaction evidence="15">
        <text>4-aminobutanal + NAD(+) + H2O = 4-aminobutanoate + NADH + 2 H(+)</text>
        <dbReference type="Rhea" id="RHEA:19105"/>
        <dbReference type="ChEBI" id="CHEBI:15377"/>
        <dbReference type="ChEBI" id="CHEBI:15378"/>
        <dbReference type="ChEBI" id="CHEBI:57540"/>
        <dbReference type="ChEBI" id="CHEBI:57945"/>
        <dbReference type="ChEBI" id="CHEBI:58264"/>
        <dbReference type="ChEBI" id="CHEBI:59888"/>
        <dbReference type="EC" id="1.2.1.19"/>
    </reaction>
    <physiologicalReaction direction="left-to-right" evidence="15">
        <dbReference type="Rhea" id="RHEA:19106"/>
    </physiologicalReaction>
</comment>
<comment type="catalytic activity">
    <reaction evidence="1">
        <text>3-deoxyglucosone + NAD(+) + H2O = 2-dehydro-3-deoxy-D-gluconate + NADH + 2 H(+)</text>
        <dbReference type="Rhea" id="RHEA:67244"/>
        <dbReference type="ChEBI" id="CHEBI:15377"/>
        <dbReference type="ChEBI" id="CHEBI:15378"/>
        <dbReference type="ChEBI" id="CHEBI:57540"/>
        <dbReference type="ChEBI" id="CHEBI:57945"/>
        <dbReference type="ChEBI" id="CHEBI:57990"/>
        <dbReference type="ChEBI" id="CHEBI:60777"/>
    </reaction>
    <physiologicalReaction direction="left-to-right" evidence="1">
        <dbReference type="Rhea" id="RHEA:67245"/>
    </physiologicalReaction>
</comment>
<comment type="catalytic activity">
    <reaction evidence="1">
        <text>(E)-4-hydroxynon-2-enal + NAD(+) + H2O = (E)-4-hydroxynon-2-enoate + NADH + 2 H(+)</text>
        <dbReference type="Rhea" id="RHEA:67248"/>
        <dbReference type="ChEBI" id="CHEBI:15377"/>
        <dbReference type="ChEBI" id="CHEBI:15378"/>
        <dbReference type="ChEBI" id="CHEBI:57540"/>
        <dbReference type="ChEBI" id="CHEBI:57945"/>
        <dbReference type="ChEBI" id="CHEBI:58968"/>
        <dbReference type="ChEBI" id="CHEBI:142920"/>
    </reaction>
    <physiologicalReaction direction="left-to-right" evidence="1">
        <dbReference type="Rhea" id="RHEA:67249"/>
    </physiologicalReaction>
</comment>
<comment type="catalytic activity">
    <reaction evidence="1">
        <text>malonaldehyde + NAD(+) + H2O = 3-oxopropanoate + NADH + 2 H(+)</text>
        <dbReference type="Rhea" id="RHEA:67252"/>
        <dbReference type="ChEBI" id="CHEBI:15377"/>
        <dbReference type="ChEBI" id="CHEBI:15378"/>
        <dbReference type="ChEBI" id="CHEBI:33190"/>
        <dbReference type="ChEBI" id="CHEBI:57540"/>
        <dbReference type="ChEBI" id="CHEBI:57945"/>
        <dbReference type="ChEBI" id="CHEBI:566274"/>
    </reaction>
    <physiologicalReaction direction="left-to-right" evidence="1">
        <dbReference type="Rhea" id="RHEA:67253"/>
    </physiologicalReaction>
</comment>
<comment type="catalytic activity">
    <reaction evidence="1">
        <text>hexanal + NAD(+) + H2O = hexanoate + NADH + 2 H(+)</text>
        <dbReference type="Rhea" id="RHEA:67276"/>
        <dbReference type="ChEBI" id="CHEBI:15377"/>
        <dbReference type="ChEBI" id="CHEBI:15378"/>
        <dbReference type="ChEBI" id="CHEBI:17120"/>
        <dbReference type="ChEBI" id="CHEBI:57540"/>
        <dbReference type="ChEBI" id="CHEBI:57945"/>
        <dbReference type="ChEBI" id="CHEBI:88528"/>
    </reaction>
    <physiologicalReaction direction="left-to-right" evidence="1">
        <dbReference type="Rhea" id="RHEA:67277"/>
    </physiologicalReaction>
</comment>
<comment type="catalytic activity">
    <reaction evidence="1">
        <text>propanal + NAD(+) + H2O = propanoate + NADH + 2 H(+)</text>
        <dbReference type="Rhea" id="RHEA:67256"/>
        <dbReference type="ChEBI" id="CHEBI:15377"/>
        <dbReference type="ChEBI" id="CHEBI:15378"/>
        <dbReference type="ChEBI" id="CHEBI:17153"/>
        <dbReference type="ChEBI" id="CHEBI:17272"/>
        <dbReference type="ChEBI" id="CHEBI:57540"/>
        <dbReference type="ChEBI" id="CHEBI:57945"/>
    </reaction>
    <physiologicalReaction direction="left-to-right" evidence="1">
        <dbReference type="Rhea" id="RHEA:67257"/>
    </physiologicalReaction>
</comment>
<comment type="catalytic activity">
    <reaction evidence="1">
        <text>acetaldehyde + NAD(+) + H2O = acetate + NADH + 2 H(+)</text>
        <dbReference type="Rhea" id="RHEA:25294"/>
        <dbReference type="ChEBI" id="CHEBI:15343"/>
        <dbReference type="ChEBI" id="CHEBI:15377"/>
        <dbReference type="ChEBI" id="CHEBI:15378"/>
        <dbReference type="ChEBI" id="CHEBI:30089"/>
        <dbReference type="ChEBI" id="CHEBI:57540"/>
        <dbReference type="ChEBI" id="CHEBI:57945"/>
        <dbReference type="EC" id="1.2.1.3"/>
    </reaction>
    <physiologicalReaction direction="left-to-right" evidence="1">
        <dbReference type="Rhea" id="RHEA:25295"/>
    </physiologicalReaction>
</comment>
<comment type="catalytic activity">
    <reaction evidence="1">
        <text>benzaldehyde + NAD(+) + H2O = benzoate + NADH + 2 H(+)</text>
        <dbReference type="Rhea" id="RHEA:11840"/>
        <dbReference type="ChEBI" id="CHEBI:15377"/>
        <dbReference type="ChEBI" id="CHEBI:15378"/>
        <dbReference type="ChEBI" id="CHEBI:16150"/>
        <dbReference type="ChEBI" id="CHEBI:17169"/>
        <dbReference type="ChEBI" id="CHEBI:57540"/>
        <dbReference type="ChEBI" id="CHEBI:57945"/>
        <dbReference type="EC" id="1.2.1.28"/>
    </reaction>
    <physiologicalReaction direction="left-to-right" evidence="1">
        <dbReference type="Rhea" id="RHEA:11841"/>
    </physiologicalReaction>
</comment>
<comment type="activity regulation">
    <text evidence="11">The aminobutyraldehyde dehydrogenase activity is negatively regulated by ethanol in vivo.</text>
</comment>
<comment type="pathway">
    <text evidence="8">Cofactor metabolism; retinol metabolism.</text>
</comment>
<comment type="subunit">
    <text evidence="1 4">Homotetramer (By similarity). Interacts with PRMT3; the interaction is direct, inhibits ALDH1A1 aldehyde dehydrogenase activity and is independent of the methyltransferase activity of PRMT3 (By similarity).</text>
</comment>
<comment type="subcellular location">
    <subcellularLocation>
        <location evidence="10">Cytoplasm</location>
        <location evidence="10">Cytosol</location>
    </subcellularLocation>
    <subcellularLocation>
        <location evidence="11">Cell projection</location>
        <location evidence="11">Axon</location>
    </subcellularLocation>
</comment>
<comment type="tissue specificity">
    <text evidence="9 10 11">Expressed in retina (PubMed:1935685). Expressed in lens and cornea (at protein level) (PubMed:17567582). Expressed by midbrain dopamine neurons (PubMed:26430123).</text>
</comment>
<comment type="PTM">
    <text evidence="2">The N-terminus is blocked most probably by acetylation.</text>
</comment>
<comment type="disruption phenotype">
    <text evidence="8 9 11">Mice lacking Aldh1a1, obtained at the expected Mendelian ratio, are viable and fertile without obvious defects in growth or survival (PubMed:12851412). However, they are more sensitive to retinol toxicity and are less efficient at metabolizing excess retinol to retinoic acid/RA (PubMed:12851412). An excess of retinol leads to the accumulation of retinaldehyde in these mice (PubMed:12851412). Enhanced alcohol consumption and preference is also observed in knockout mice (PubMed:26430123). A consistent lenticular opacification is also detected in old mice (PubMed:17567582).</text>
</comment>
<comment type="similarity">
    <text evidence="13">Belongs to the aldehyde dehydrogenase family.</text>
</comment>
<comment type="sequence caution" evidence="13">
    <conflict type="erroneous initiation">
        <sequence resource="EMBL-CDS" id="AAH44729"/>
    </conflict>
    <text>Extended N-terminus.</text>
</comment>
<feature type="initiator methionine" description="Removed" evidence="2">
    <location>
        <position position="1"/>
    </location>
</feature>
<feature type="chain" id="PRO_0000056417" description="Aldehyde dehydrogenase 1A1">
    <location>
        <begin position="2"/>
        <end position="501"/>
    </location>
</feature>
<feature type="region of interest" description="Mediates interaction with PRMT3" evidence="1">
    <location>
        <begin position="336"/>
        <end position="501"/>
    </location>
</feature>
<feature type="active site" description="Proton acceptor" evidence="6 7">
    <location>
        <position position="269"/>
    </location>
</feature>
<feature type="active site" description="Nucleophile" evidence="6 7">
    <location>
        <position position="303"/>
    </location>
</feature>
<feature type="binding site" evidence="1">
    <location>
        <begin position="167"/>
        <end position="170"/>
    </location>
    <ligand>
        <name>NAD(+)</name>
        <dbReference type="ChEBI" id="CHEBI:57540"/>
    </ligand>
</feature>
<feature type="binding site" evidence="1">
    <location>
        <begin position="193"/>
        <end position="196"/>
    </location>
    <ligand>
        <name>NAD(+)</name>
        <dbReference type="ChEBI" id="CHEBI:57540"/>
    </ligand>
</feature>
<feature type="binding site" evidence="1">
    <location>
        <begin position="226"/>
        <end position="227"/>
    </location>
    <ligand>
        <name>NAD(+)</name>
        <dbReference type="ChEBI" id="CHEBI:57540"/>
    </ligand>
</feature>
<feature type="binding site" evidence="1">
    <location>
        <begin position="246"/>
        <end position="247"/>
    </location>
    <ligand>
        <name>NAD(+)</name>
        <dbReference type="ChEBI" id="CHEBI:57540"/>
    </ligand>
</feature>
<feature type="binding site" evidence="1">
    <location>
        <begin position="269"/>
        <end position="271"/>
    </location>
    <ligand>
        <name>NAD(+)</name>
        <dbReference type="ChEBI" id="CHEBI:57540"/>
    </ligand>
</feature>
<feature type="binding site" evidence="1">
    <location>
        <begin position="349"/>
        <end position="353"/>
    </location>
    <ligand>
        <name>NAD(+)</name>
        <dbReference type="ChEBI" id="CHEBI:57540"/>
    </ligand>
</feature>
<feature type="binding site" evidence="1">
    <location>
        <begin position="400"/>
        <end position="402"/>
    </location>
    <ligand>
        <name>NAD(+)</name>
        <dbReference type="ChEBI" id="CHEBI:57540"/>
    </ligand>
</feature>
<feature type="site" description="Transition state stabilizer" evidence="3">
    <location>
        <position position="170"/>
    </location>
</feature>
<feature type="modified residue" description="N-acetylserine" evidence="2">
    <location>
        <position position="2"/>
    </location>
</feature>
<feature type="modified residue" description="N6-acetyllysine" evidence="1">
    <location>
        <position position="91"/>
    </location>
</feature>
<feature type="modified residue" description="N6-acetyllysine" evidence="1">
    <location>
        <position position="128"/>
    </location>
</feature>
<feature type="modified residue" description="N6-acetyllysine" evidence="1">
    <location>
        <position position="252"/>
    </location>
</feature>
<feature type="modified residue" description="Phosphothreonine" evidence="1">
    <location>
        <position position="337"/>
    </location>
</feature>
<feature type="modified residue" description="N6-acetyllysine" evidence="1">
    <location>
        <position position="353"/>
    </location>
</feature>
<feature type="modified residue" description="N6-acetyllysine" evidence="1">
    <location>
        <position position="367"/>
    </location>
</feature>
<feature type="modified residue" description="N6-acetyllysine" evidence="1">
    <location>
        <position position="410"/>
    </location>
</feature>
<feature type="modified residue" description="Phosphoserine" evidence="1">
    <location>
        <position position="413"/>
    </location>
</feature>
<feature type="modified residue" description="N6-acetyllysine" evidence="1">
    <location>
        <position position="419"/>
    </location>
</feature>
<feature type="modified residue" description="N6-acetyllysine" evidence="1">
    <location>
        <position position="435"/>
    </location>
</feature>
<feature type="modified residue" description="N6-acetyllysine" evidence="1">
    <location>
        <position position="495"/>
    </location>
</feature>
<feature type="sequence conflict" description="In Ref. 1; AAA37202/AAA37203." evidence="13" ref="1">
    <original>A</original>
    <variation>R</variation>
    <location>
        <position position="8"/>
    </location>
</feature>
<feature type="sequence conflict" description="In Ref. 2; AAB32754." evidence="13" ref="2">
    <original>T</original>
    <variation>S</variation>
    <location>
        <position position="45"/>
    </location>
</feature>
<feature type="sequence conflict" description="In Ref. 2; AAB32754." evidence="13" ref="2">
    <original>H</original>
    <variation>Q</variation>
    <location>
        <position position="51"/>
    </location>
</feature>
<feature type="sequence conflict" description="In Ref. 1; AAA37202." evidence="13" ref="1">
    <original>R</original>
    <variation>C</variation>
    <location>
        <position position="87"/>
    </location>
</feature>
<feature type="sequence conflict" description="In Ref. 4; AA sequence." evidence="13" ref="4">
    <original>I</original>
    <variation>Y</variation>
    <location>
        <position position="140"/>
    </location>
</feature>
<feature type="sequence conflict" description="In Ref. 1; AAA37202." evidence="13" ref="1">
    <original>M</original>
    <variation>I</variation>
    <location>
        <position position="458"/>
    </location>
</feature>
<feature type="strand" evidence="17">
    <location>
        <begin position="22"/>
        <end position="25"/>
    </location>
</feature>
<feature type="strand" evidence="17">
    <location>
        <begin position="28"/>
        <end position="30"/>
    </location>
</feature>
<feature type="strand" evidence="17">
    <location>
        <begin position="37"/>
        <end position="41"/>
    </location>
</feature>
<feature type="turn" evidence="17">
    <location>
        <begin position="43"/>
        <end position="45"/>
    </location>
</feature>
<feature type="strand" evidence="17">
    <location>
        <begin position="48"/>
        <end position="53"/>
    </location>
</feature>
<feature type="helix" evidence="17">
    <location>
        <begin position="57"/>
        <end position="70"/>
    </location>
</feature>
<feature type="helix" evidence="17">
    <location>
        <begin position="76"/>
        <end position="79"/>
    </location>
</feature>
<feature type="helix" evidence="17">
    <location>
        <begin position="82"/>
        <end position="98"/>
    </location>
</feature>
<feature type="helix" evidence="17">
    <location>
        <begin position="100"/>
        <end position="111"/>
    </location>
</feature>
<feature type="helix" evidence="17">
    <location>
        <begin position="115"/>
        <end position="120"/>
    </location>
</feature>
<feature type="helix" evidence="17">
    <location>
        <begin position="122"/>
        <end position="136"/>
    </location>
</feature>
<feature type="turn" evidence="17">
    <location>
        <begin position="137"/>
        <end position="139"/>
    </location>
</feature>
<feature type="strand" evidence="17">
    <location>
        <begin position="142"/>
        <end position="145"/>
    </location>
</feature>
<feature type="strand" evidence="17">
    <location>
        <begin position="148"/>
        <end position="159"/>
    </location>
</feature>
<feature type="strand" evidence="17">
    <location>
        <begin position="161"/>
        <end position="166"/>
    </location>
</feature>
<feature type="strand" evidence="17">
    <location>
        <begin position="169"/>
        <end position="171"/>
    </location>
</feature>
<feature type="helix" evidence="17">
    <location>
        <begin position="172"/>
        <end position="186"/>
    </location>
</feature>
<feature type="strand" evidence="17">
    <location>
        <begin position="189"/>
        <end position="193"/>
    </location>
</feature>
<feature type="helix" evidence="17">
    <location>
        <begin position="200"/>
        <end position="212"/>
    </location>
</feature>
<feature type="strand" evidence="17">
    <location>
        <begin position="218"/>
        <end position="221"/>
    </location>
</feature>
<feature type="helix" evidence="17">
    <location>
        <begin position="226"/>
        <end position="234"/>
    </location>
</feature>
<feature type="strand" evidence="17">
    <location>
        <begin position="240"/>
        <end position="246"/>
    </location>
</feature>
<feature type="helix" evidence="17">
    <location>
        <begin position="248"/>
        <end position="260"/>
    </location>
</feature>
<feature type="strand" evidence="17">
    <location>
        <begin position="265"/>
        <end position="269"/>
    </location>
</feature>
<feature type="strand" evidence="17">
    <location>
        <begin position="274"/>
        <end position="278"/>
    </location>
</feature>
<feature type="helix" evidence="17">
    <location>
        <begin position="284"/>
        <end position="296"/>
    </location>
</feature>
<feature type="turn" evidence="17">
    <location>
        <begin position="297"/>
        <end position="300"/>
    </location>
</feature>
<feature type="strand" evidence="17">
    <location>
        <begin position="306"/>
        <end position="312"/>
    </location>
</feature>
<feature type="helix" evidence="17">
    <location>
        <begin position="313"/>
        <end position="326"/>
    </location>
</feature>
<feature type="helix" evidence="17">
    <location>
        <begin position="327"/>
        <end position="329"/>
    </location>
</feature>
<feature type="helix" evidence="17">
    <location>
        <begin position="348"/>
        <end position="363"/>
    </location>
</feature>
<feature type="strand" evidence="17">
    <location>
        <begin position="367"/>
        <end position="370"/>
    </location>
</feature>
<feature type="strand" evidence="17">
    <location>
        <begin position="376"/>
        <end position="379"/>
    </location>
</feature>
<feature type="strand" evidence="17">
    <location>
        <begin position="385"/>
        <end position="389"/>
    </location>
</feature>
<feature type="helix" evidence="17">
    <location>
        <begin position="395"/>
        <end position="398"/>
    </location>
</feature>
<feature type="strand" evidence="17">
    <location>
        <begin position="403"/>
        <end position="411"/>
    </location>
</feature>
<feature type="helix" evidence="17">
    <location>
        <begin position="414"/>
        <end position="421"/>
    </location>
</feature>
<feature type="strand" evidence="17">
    <location>
        <begin position="428"/>
        <end position="433"/>
    </location>
</feature>
<feature type="helix" evidence="17">
    <location>
        <begin position="437"/>
        <end position="446"/>
    </location>
</feature>
<feature type="strand" evidence="17">
    <location>
        <begin position="450"/>
        <end position="455"/>
    </location>
</feature>
<feature type="strand" evidence="17">
    <location>
        <begin position="462"/>
        <end position="464"/>
    </location>
</feature>
<feature type="helix" evidence="17">
    <location>
        <begin position="470"/>
        <end position="472"/>
    </location>
</feature>
<feature type="strand" evidence="17">
    <location>
        <begin position="473"/>
        <end position="479"/>
    </location>
</feature>
<feature type="helix" evidence="17">
    <location>
        <begin position="480"/>
        <end position="484"/>
    </location>
</feature>
<feature type="strand" evidence="17">
    <location>
        <begin position="487"/>
        <end position="495"/>
    </location>
</feature>
<name>AL1A1_MOUSE</name>
<proteinExistence type="evidence at protein level"/>
<evidence type="ECO:0000250" key="1">
    <source>
        <dbReference type="UniProtKB" id="P00352"/>
    </source>
</evidence>
<evidence type="ECO:0000250" key="2">
    <source>
        <dbReference type="UniProtKB" id="P15437"/>
    </source>
</evidence>
<evidence type="ECO:0000250" key="3">
    <source>
        <dbReference type="UniProtKB" id="P20000"/>
    </source>
</evidence>
<evidence type="ECO:0000250" key="4">
    <source>
        <dbReference type="UniProtKB" id="P51977"/>
    </source>
</evidence>
<evidence type="ECO:0000250" key="5">
    <source>
        <dbReference type="UniProtKB" id="Q8HYE4"/>
    </source>
</evidence>
<evidence type="ECO:0000255" key="6">
    <source>
        <dbReference type="PROSITE-ProRule" id="PRU10007"/>
    </source>
</evidence>
<evidence type="ECO:0000255" key="7">
    <source>
        <dbReference type="PROSITE-ProRule" id="PRU10008"/>
    </source>
</evidence>
<evidence type="ECO:0000269" key="8">
    <source>
    </source>
</evidence>
<evidence type="ECO:0000269" key="9">
    <source>
    </source>
</evidence>
<evidence type="ECO:0000269" key="10">
    <source>
    </source>
</evidence>
<evidence type="ECO:0000269" key="11">
    <source>
    </source>
</evidence>
<evidence type="ECO:0000303" key="12">
    <source>
    </source>
</evidence>
<evidence type="ECO:0000305" key="13"/>
<evidence type="ECO:0000305" key="14">
    <source>
    </source>
</evidence>
<evidence type="ECO:0000305" key="15">
    <source>
    </source>
</evidence>
<evidence type="ECO:0000312" key="16">
    <source>
        <dbReference type="MGI" id="MGI:1353450"/>
    </source>
</evidence>
<evidence type="ECO:0007829" key="17">
    <source>
        <dbReference type="PDB" id="7YOB"/>
    </source>
</evidence>
<protein>
    <recommendedName>
        <fullName evidence="14">Aldehyde dehydrogenase 1A1</fullName>
        <ecNumber evidence="15">1.2.1.19</ecNumber>
        <ecNumber evidence="1">1.2.1.28</ecNumber>
        <ecNumber evidence="8">1.2.1.3</ecNumber>
        <ecNumber evidence="8">1.2.1.36</ecNumber>
    </recommendedName>
    <alternativeName>
        <fullName evidence="1">3-deoxyglucosone dehydrogenase</fullName>
    </alternativeName>
    <alternativeName>
        <fullName>ALDH-E1</fullName>
    </alternativeName>
    <alternativeName>
        <fullName>ALHDII</fullName>
    </alternativeName>
    <alternativeName>
        <fullName evidence="16">Aldehyde dehydrogenase family 1 member A1</fullName>
    </alternativeName>
    <alternativeName>
        <fullName evidence="12">Aldehyde dehydrogenase, cytosolic</fullName>
    </alternativeName>
    <alternativeName>
        <fullName evidence="14">Retinal dehydrogenase 1</fullName>
        <shortName evidence="13">RALDH 1</shortName>
        <shortName evidence="13">RalDH1</shortName>
    </alternativeName>
</protein>
<keyword id="KW-0002">3D-structure</keyword>
<keyword id="KW-0007">Acetylation</keyword>
<keyword id="KW-0966">Cell projection</keyword>
<keyword id="KW-0963">Cytoplasm</keyword>
<keyword id="KW-0903">Direct protein sequencing</keyword>
<keyword id="KW-0443">Lipid metabolism</keyword>
<keyword id="KW-0520">NAD</keyword>
<keyword id="KW-0560">Oxidoreductase</keyword>
<keyword id="KW-0597">Phosphoprotein</keyword>
<keyword id="KW-1185">Reference proteome</keyword>
<gene>
    <name evidence="16" type="primary">Aldh1a1</name>
    <name type="synonym">Ahd-2</name>
    <name type="synonym">Ahd2</name>
    <name type="synonym">Aldh1</name>
</gene>
<reference key="1">
    <citation type="journal article" date="1991" name="Gene">
        <title>Isolation and characterization of a cytosolic aldehyde dehydrogenase-encoding cDNA from mouse liver.</title>
        <authorList>
            <person name="Rongnoparut P."/>
            <person name="Weaver S."/>
        </authorList>
    </citation>
    <scope>NUCLEOTIDE SEQUENCE [GENOMIC DNA / MRNA]</scope>
    <source>
        <strain>BALB/cJ</strain>
        <strain>C57BL/6J</strain>
        <tissue>Liver</tissue>
    </source>
</reference>
<reference key="2">
    <citation type="journal article" date="1994" name="Biochem. Med. Metab. Biol.">
        <title>DNA sequence analysis of the cytosolic acetaldehyde dehydrogenase gene (Ahd-2) in mouse strains with variable ethanol preferences.</title>
        <authorList>
            <person name="Bond S.L."/>
            <person name="Singh S.M."/>
        </authorList>
    </citation>
    <scope>NUCLEOTIDE SEQUENCE [GENOMIC DNA / MRNA]</scope>
    <source>
        <strain>129/ReJ</strain>
        <strain>BALB/cJ</strain>
        <strain>C57BL/6J</strain>
        <tissue>Liver</tissue>
    </source>
</reference>
<reference key="3">
    <citation type="journal article" date="2004" name="Genome Res.">
        <title>The status, quality, and expansion of the NIH full-length cDNA project: the Mammalian Gene Collection (MGC).</title>
        <authorList>
            <consortium name="The MGC Project Team"/>
        </authorList>
    </citation>
    <scope>NUCLEOTIDE SEQUENCE [LARGE SCALE MRNA]</scope>
    <source>
        <strain>FVB/N</strain>
        <tissue>Colon</tissue>
        <tissue>Liver</tissue>
    </source>
</reference>
<reference key="4">
    <citation type="journal article" date="1991" name="Development">
        <title>Aldehyde dehydrogenase is a positional marker in the retina.</title>
        <authorList>
            <person name="McCaffery P."/>
            <person name="Tempst P."/>
            <person name="Lara G."/>
            <person name="Drager U.C."/>
        </authorList>
    </citation>
    <scope>PROTEIN SEQUENCE OF 23-52; 140-156; 211-230; 309-320; 330-349; 400-410; 421-435 AND 477-490</scope>
    <scope>SUBCELLULAR LOCATION</scope>
    <scope>TISSUE SPECIFICITY</scope>
    <source>
        <tissue>Embryonic retina</tissue>
    </source>
</reference>
<reference key="5">
    <citation type="journal article" date="2003" name="J. Biol. Chem.">
        <title>Genetic evidence that retinaldehyde dehydrogenase Raldh1 (Aldh1a1) functions downstream of alcohol dehydrogenase Adh1 in metabolism of retinol to retinoic acid.</title>
        <authorList>
            <person name="Molotkov A."/>
            <person name="Duester G."/>
        </authorList>
    </citation>
    <scope>FUNCTION</scope>
    <scope>CATALYTIC ACTIVITY</scope>
    <scope>PATHWAY</scope>
    <scope>DISRUPTION PHENOTYPE</scope>
</reference>
<reference key="6">
    <citation type="journal article" date="2007" name="J. Biol. Chem.">
        <title>Multiple and additive functions of ALDH3A1 and ALDH1A1: cataract phenotype and ocular oxidative damage in Aldh3a1(-/-)/Aldh1a1(-/-) knock-out mice.</title>
        <authorList>
            <person name="Lassen N."/>
            <person name="Bateman J.B."/>
            <person name="Estey T."/>
            <person name="Kuszak J.R."/>
            <person name="Nees D.W."/>
            <person name="Piatigorsky J."/>
            <person name="Duester G."/>
            <person name="Day B.J."/>
            <person name="Huang J."/>
            <person name="Hines L.M."/>
            <person name="Vasiliou V."/>
        </authorList>
    </citation>
    <scope>FUNCTION</scope>
    <scope>TISSUE SPECIFICITY</scope>
    <scope>DISRUPTION PHENOTYPE</scope>
</reference>
<reference key="7">
    <citation type="journal article" date="2010" name="Cell">
        <title>A tissue-specific atlas of mouse protein phosphorylation and expression.</title>
        <authorList>
            <person name="Huttlin E.L."/>
            <person name="Jedrychowski M.P."/>
            <person name="Elias J.E."/>
            <person name="Goswami T."/>
            <person name="Rad R."/>
            <person name="Beausoleil S.A."/>
            <person name="Villen J."/>
            <person name="Haas W."/>
            <person name="Sowa M.E."/>
            <person name="Gygi S.P."/>
        </authorList>
    </citation>
    <scope>IDENTIFICATION BY MASS SPECTROMETRY [LARGE SCALE ANALYSIS]</scope>
    <source>
        <tissue>Brain</tissue>
        <tissue>Brown adipose tissue</tissue>
        <tissue>Heart</tissue>
        <tissue>Kidney</tissue>
        <tissue>Liver</tissue>
        <tissue>Lung</tissue>
        <tissue>Pancreas</tissue>
        <tissue>Spleen</tissue>
        <tissue>Testis</tissue>
    </source>
</reference>
<reference key="8">
    <citation type="journal article" date="2015" name="Science">
        <title>Aldehyde dehydrogenase 1a1 mediates a GABA synthesis pathway in midbrain dopaminergic neurons.</title>
        <authorList>
            <person name="Kim J.I."/>
            <person name="Ganesan S."/>
            <person name="Luo S.X."/>
            <person name="Wu Y.W."/>
            <person name="Park E."/>
            <person name="Huang E.J."/>
            <person name="Chen L."/>
            <person name="Ding J.B."/>
        </authorList>
    </citation>
    <scope>FUNCTION</scope>
    <scope>CATALYTIC ACTIVITY</scope>
    <scope>ACTIVITY REGULATION</scope>
    <scope>SUBCELLULAR LOCATION</scope>
    <scope>TISSUE SPECIFICITY</scope>
    <scope>DISRUPTION PHENOTYPE</scope>
</reference>
<sequence>MSSPAQPAVPAPLADLKIQHTKIFINNEWHNSVSGKKFPVLNPATEEVICHVEEGDKADVDKAVKAARQAFQIGSPWRTMDASERGRLLNKLADLMERDRLLLATMEALNGGKVFANAYLSDLGGCIKALKYCAGWADKIHGQTIPSDGDIFTYTRREPIGVCGQIIPWNFPMLMFIWKIGPALSCGNTVVVKPAEQTPLTALHLASLIKEAGFPPGVVNIVPGYGPTAGAAISSHMDVDKVAFTGSTQVGKLIKEAAGKSNLKRVTLELGGKSPCIVFADADLDIAVEFAHHGVFYHQGQCCVAASRIFVEESVYDEFVKRSVERAKKYVLGNPLTPGINQGPQIDKEQHDKILDLIESGKKEGAKLECGGGRWGNKGFFVQPTVFSNVTDEMRIAKEEIFGPVQQIMKFKSVDDVIKRANNTTYGLAAGLFTKDLDKAITVSSALQAGVVWVNCYMMLSAQCPFGGFKMSGNGRELGEHGLYEYTELKTVAMKISQKNS</sequence>
<accession>P24549</accession>
<accession>Q7TQJ0</accession>
<accession>Q811J0</accession>
<organism>
    <name type="scientific">Mus musculus</name>
    <name type="common">Mouse</name>
    <dbReference type="NCBI Taxonomy" id="10090"/>
    <lineage>
        <taxon>Eukaryota</taxon>
        <taxon>Metazoa</taxon>
        <taxon>Chordata</taxon>
        <taxon>Craniata</taxon>
        <taxon>Vertebrata</taxon>
        <taxon>Euteleostomi</taxon>
        <taxon>Mammalia</taxon>
        <taxon>Eutheria</taxon>
        <taxon>Euarchontoglires</taxon>
        <taxon>Glires</taxon>
        <taxon>Rodentia</taxon>
        <taxon>Myomorpha</taxon>
        <taxon>Muroidea</taxon>
        <taxon>Muridae</taxon>
        <taxon>Murinae</taxon>
        <taxon>Mus</taxon>
        <taxon>Mus</taxon>
    </lineage>
</organism>
<dbReference type="EC" id="1.2.1.19" evidence="15"/>
<dbReference type="EC" id="1.2.1.28" evidence="1"/>
<dbReference type="EC" id="1.2.1.3" evidence="8"/>
<dbReference type="EC" id="1.2.1.36" evidence="8"/>
<dbReference type="EMBL" id="M74570">
    <property type="protein sequence ID" value="AAA37202.1"/>
    <property type="molecule type" value="mRNA"/>
</dbReference>
<dbReference type="EMBL" id="M74571">
    <property type="protein sequence ID" value="AAA37203.1"/>
    <property type="molecule type" value="Genomic_DNA"/>
</dbReference>
<dbReference type="EMBL" id="S75713">
    <property type="protein sequence ID" value="AAB32754.2"/>
    <property type="molecule type" value="mRNA"/>
</dbReference>
<dbReference type="EMBL" id="S77047">
    <property type="status" value="NOT_ANNOTATED_CDS"/>
    <property type="molecule type" value="Genomic_DNA"/>
</dbReference>
<dbReference type="EMBL" id="BC044729">
    <property type="protein sequence ID" value="AAH44729.1"/>
    <property type="status" value="ALT_INIT"/>
    <property type="molecule type" value="mRNA"/>
</dbReference>
<dbReference type="EMBL" id="BC054386">
    <property type="protein sequence ID" value="AAH54386.1"/>
    <property type="molecule type" value="mRNA"/>
</dbReference>
<dbReference type="CCDS" id="CCDS29695.1"/>
<dbReference type="PIR" id="JQ1004">
    <property type="entry name" value="JQ1004"/>
</dbReference>
<dbReference type="RefSeq" id="NP_001348432.1">
    <property type="nucleotide sequence ID" value="NM_001361503.1"/>
</dbReference>
<dbReference type="RefSeq" id="NP_001348433.1">
    <property type="nucleotide sequence ID" value="NM_001361504.1"/>
</dbReference>
<dbReference type="RefSeq" id="NP_001348434.1">
    <property type="nucleotide sequence ID" value="NM_001361505.1"/>
</dbReference>
<dbReference type="RefSeq" id="NP_001348435.1">
    <property type="nucleotide sequence ID" value="NM_001361506.1"/>
</dbReference>
<dbReference type="RefSeq" id="NP_038495.2">
    <property type="nucleotide sequence ID" value="NM_013467.4"/>
</dbReference>
<dbReference type="PDB" id="7YOB">
    <property type="method" value="X-ray"/>
    <property type="resolution" value="2.89 A"/>
    <property type="chains" value="A/B/C/D/E/F/G/H=1-501"/>
</dbReference>
<dbReference type="PDBsum" id="7YOB"/>
<dbReference type="SMR" id="P24549"/>
<dbReference type="BioGRID" id="198063">
    <property type="interactions" value="7"/>
</dbReference>
<dbReference type="FunCoup" id="P24549">
    <property type="interactions" value="770"/>
</dbReference>
<dbReference type="IntAct" id="P24549">
    <property type="interactions" value="1"/>
</dbReference>
<dbReference type="MINT" id="P24549"/>
<dbReference type="STRING" id="10090.ENSMUSP00000153410"/>
<dbReference type="GlyGen" id="P24549">
    <property type="glycosylation" value="3 sites, 1 N-linked glycan (1 site), 1 O-linked glycan (1 site)"/>
</dbReference>
<dbReference type="iPTMnet" id="P24549"/>
<dbReference type="PhosphoSitePlus" id="P24549"/>
<dbReference type="SwissPalm" id="P24549"/>
<dbReference type="REPRODUCTION-2DPAGE" id="IPI00626662"/>
<dbReference type="REPRODUCTION-2DPAGE" id="P24549"/>
<dbReference type="CPTAC" id="non-CPTAC-3632"/>
<dbReference type="jPOST" id="P24549"/>
<dbReference type="PaxDb" id="10090-ENSMUSP00000084918"/>
<dbReference type="PeptideAtlas" id="P24549"/>
<dbReference type="ProteomicsDB" id="296160"/>
<dbReference type="Pumba" id="P24549"/>
<dbReference type="DNASU" id="11668"/>
<dbReference type="Ensembl" id="ENSMUST00000087638.4">
    <property type="protein sequence ID" value="ENSMUSP00000084918.4"/>
    <property type="gene ID" value="ENSMUSG00000053279.9"/>
</dbReference>
<dbReference type="Ensembl" id="ENSMUST00000225337.3">
    <property type="protein sequence ID" value="ENSMUSP00000153410.3"/>
    <property type="gene ID" value="ENSMUSG00000053279.9"/>
</dbReference>
<dbReference type="GeneID" id="11668"/>
<dbReference type="KEGG" id="mmu:11668"/>
<dbReference type="UCSC" id="uc008gym.1">
    <property type="organism name" value="mouse"/>
</dbReference>
<dbReference type="AGR" id="MGI:1353450"/>
<dbReference type="CTD" id="216"/>
<dbReference type="MGI" id="MGI:1353450">
    <property type="gene designation" value="Aldh1a1"/>
</dbReference>
<dbReference type="VEuPathDB" id="HostDB:ENSMUSG00000053279"/>
<dbReference type="eggNOG" id="KOG2450">
    <property type="taxonomic scope" value="Eukaryota"/>
</dbReference>
<dbReference type="GeneTree" id="ENSGT00940000154609"/>
<dbReference type="HOGENOM" id="CLU_005391_0_2_1"/>
<dbReference type="InParanoid" id="P24549"/>
<dbReference type="OMA" id="TKAVWIT"/>
<dbReference type="OrthoDB" id="310895at2759"/>
<dbReference type="PhylomeDB" id="P24549"/>
<dbReference type="TreeFam" id="TF300455"/>
<dbReference type="BRENDA" id="1.2.1.36">
    <property type="organism ID" value="3474"/>
</dbReference>
<dbReference type="Reactome" id="R-MMU-5365859">
    <property type="pathway name" value="RA biosynthesis pathway"/>
</dbReference>
<dbReference type="Reactome" id="R-MMU-70350">
    <property type="pathway name" value="Fructose catabolism"/>
</dbReference>
<dbReference type="Reactome" id="R-MMU-71384">
    <property type="pathway name" value="Ethanol oxidation"/>
</dbReference>
<dbReference type="SABIO-RK" id="P24549"/>
<dbReference type="UniPathway" id="UPA00912"/>
<dbReference type="BioGRID-ORCS" id="11668">
    <property type="hits" value="3 hits in 77 CRISPR screens"/>
</dbReference>
<dbReference type="ChiTaRS" id="Aldh1a1">
    <property type="organism name" value="mouse"/>
</dbReference>
<dbReference type="PRO" id="PR:P24549"/>
<dbReference type="Proteomes" id="UP000000589">
    <property type="component" value="Chromosome 19"/>
</dbReference>
<dbReference type="RNAct" id="P24549">
    <property type="molecule type" value="protein"/>
</dbReference>
<dbReference type="Bgee" id="ENSMUSG00000053279">
    <property type="expression patterns" value="Expressed in right lung lobe and 261 other cell types or tissues"/>
</dbReference>
<dbReference type="ExpressionAtlas" id="P24549">
    <property type="expression patterns" value="baseline and differential"/>
</dbReference>
<dbReference type="GO" id="GO:0030424">
    <property type="term" value="C:axon"/>
    <property type="evidence" value="ECO:0000314"/>
    <property type="project" value="UniProtKB"/>
</dbReference>
<dbReference type="GO" id="GO:0005829">
    <property type="term" value="C:cytosol"/>
    <property type="evidence" value="ECO:0000250"/>
    <property type="project" value="UniProtKB"/>
</dbReference>
<dbReference type="GO" id="GO:0045202">
    <property type="term" value="C:synapse"/>
    <property type="evidence" value="ECO:0000314"/>
    <property type="project" value="UniProtKB"/>
</dbReference>
<dbReference type="GO" id="GO:0004028">
    <property type="term" value="F:3-chloroallyl aldehyde dehydrogenase activity"/>
    <property type="evidence" value="ECO:0000314"/>
    <property type="project" value="MGI"/>
</dbReference>
<dbReference type="GO" id="GO:0106373">
    <property type="term" value="F:3-deoxyglucosone dehydrogenase activity"/>
    <property type="evidence" value="ECO:0000250"/>
    <property type="project" value="UniProtKB"/>
</dbReference>
<dbReference type="GO" id="GO:0140087">
    <property type="term" value="F:acetaldehyde dehydrogenase (NAD+) activity"/>
    <property type="evidence" value="ECO:0007669"/>
    <property type="project" value="RHEA"/>
</dbReference>
<dbReference type="GO" id="GO:0004029">
    <property type="term" value="F:aldehyde dehydrogenase (NAD+) activity"/>
    <property type="evidence" value="ECO:0000250"/>
    <property type="project" value="UniProtKB"/>
</dbReference>
<dbReference type="GO" id="GO:0019145">
    <property type="term" value="F:aminobutyraldehyde dehydrogenase (NAD+) activity"/>
    <property type="evidence" value="ECO:0000315"/>
    <property type="project" value="UniProtKB"/>
</dbReference>
<dbReference type="GO" id="GO:0018479">
    <property type="term" value="F:benzaldehyde dehydrogenase (NAD+) activity"/>
    <property type="evidence" value="ECO:0007669"/>
    <property type="project" value="RHEA"/>
</dbReference>
<dbReference type="GO" id="GO:0051287">
    <property type="term" value="F:NAD binding"/>
    <property type="evidence" value="ECO:0000250"/>
    <property type="project" value="CAFA"/>
</dbReference>
<dbReference type="GO" id="GO:0001758">
    <property type="term" value="F:retinal dehydrogenase activity"/>
    <property type="evidence" value="ECO:0000250"/>
    <property type="project" value="UniProtKB"/>
</dbReference>
<dbReference type="GO" id="GO:0042904">
    <property type="term" value="P:9-cis-retinoic acid biosynthetic process"/>
    <property type="evidence" value="ECO:0000314"/>
    <property type="project" value="MGI"/>
</dbReference>
<dbReference type="GO" id="GO:0006915">
    <property type="term" value="P:apoptotic process"/>
    <property type="evidence" value="ECO:0000316"/>
    <property type="project" value="MGI"/>
</dbReference>
<dbReference type="GO" id="GO:0110095">
    <property type="term" value="P:cellular detoxification of aldehyde"/>
    <property type="evidence" value="ECO:0000250"/>
    <property type="project" value="UniProtKB"/>
</dbReference>
<dbReference type="GO" id="GO:0048048">
    <property type="term" value="P:embryonic eye morphogenesis"/>
    <property type="evidence" value="ECO:0000316"/>
    <property type="project" value="MGI"/>
</dbReference>
<dbReference type="GO" id="GO:0030392">
    <property type="term" value="P:fructosamine catabolic process"/>
    <property type="evidence" value="ECO:0000250"/>
    <property type="project" value="UniProtKB"/>
</dbReference>
<dbReference type="GO" id="GO:0006001">
    <property type="term" value="P:fructose catabolic process"/>
    <property type="evidence" value="ECO:0000314"/>
    <property type="project" value="MGI"/>
</dbReference>
<dbReference type="GO" id="GO:0009449">
    <property type="term" value="P:gamma-aminobutyric acid biosynthetic process"/>
    <property type="evidence" value="ECO:0000315"/>
    <property type="project" value="UniProtKB"/>
</dbReference>
<dbReference type="GO" id="GO:0036438">
    <property type="term" value="P:maintenance of lens transparency"/>
    <property type="evidence" value="ECO:0000250"/>
    <property type="project" value="UniProtKB"/>
</dbReference>
<dbReference type="GO" id="GO:0120163">
    <property type="term" value="P:negative regulation of cold-induced thermogenesis"/>
    <property type="evidence" value="ECO:0000315"/>
    <property type="project" value="YuBioLab"/>
</dbReference>
<dbReference type="GO" id="GO:0002072">
    <property type="term" value="P:optic cup morphogenesis involved in camera-type eye development"/>
    <property type="evidence" value="ECO:0000316"/>
    <property type="project" value="MGI"/>
</dbReference>
<dbReference type="GO" id="GO:0043065">
    <property type="term" value="P:positive regulation of apoptotic process"/>
    <property type="evidence" value="ECO:0000316"/>
    <property type="project" value="MGI"/>
</dbReference>
<dbReference type="GO" id="GO:0009410">
    <property type="term" value="P:response to xenobiotic stimulus"/>
    <property type="evidence" value="ECO:0000314"/>
    <property type="project" value="MGI"/>
</dbReference>
<dbReference type="GO" id="GO:0042573">
    <property type="term" value="P:retinoic acid metabolic process"/>
    <property type="evidence" value="ECO:0000314"/>
    <property type="project" value="MGI"/>
</dbReference>
<dbReference type="GO" id="GO:0042572">
    <property type="term" value="P:retinol metabolic process"/>
    <property type="evidence" value="ECO:0000315"/>
    <property type="project" value="MGI"/>
</dbReference>
<dbReference type="CDD" id="cd07141">
    <property type="entry name" value="ALDH_F1AB_F2_RALDH1"/>
    <property type="match status" value="1"/>
</dbReference>
<dbReference type="FunFam" id="3.40.605.10:FF:000029">
    <property type="entry name" value="Aldehyde dehydrogenase, mitochondrial"/>
    <property type="match status" value="1"/>
</dbReference>
<dbReference type="FunFam" id="3.40.605.10:FF:000026">
    <property type="entry name" value="Aldehyde dehydrogenase, putative"/>
    <property type="match status" value="1"/>
</dbReference>
<dbReference type="FunFam" id="3.40.309.10:FF:000001">
    <property type="entry name" value="Mitochondrial aldehyde dehydrogenase 2"/>
    <property type="match status" value="1"/>
</dbReference>
<dbReference type="Gene3D" id="3.40.605.10">
    <property type="entry name" value="Aldehyde Dehydrogenase, Chain A, domain 1"/>
    <property type="match status" value="1"/>
</dbReference>
<dbReference type="Gene3D" id="3.40.309.10">
    <property type="entry name" value="Aldehyde Dehydrogenase, Chain A, domain 2"/>
    <property type="match status" value="1"/>
</dbReference>
<dbReference type="InterPro" id="IPR016161">
    <property type="entry name" value="Ald_DH/histidinol_DH"/>
</dbReference>
<dbReference type="InterPro" id="IPR016163">
    <property type="entry name" value="Ald_DH_C"/>
</dbReference>
<dbReference type="InterPro" id="IPR016160">
    <property type="entry name" value="Ald_DH_CS_CYS"/>
</dbReference>
<dbReference type="InterPro" id="IPR029510">
    <property type="entry name" value="Ald_DH_CS_GLU"/>
</dbReference>
<dbReference type="InterPro" id="IPR016162">
    <property type="entry name" value="Ald_DH_N"/>
</dbReference>
<dbReference type="InterPro" id="IPR015590">
    <property type="entry name" value="Aldehyde_DH_dom"/>
</dbReference>
<dbReference type="PANTHER" id="PTHR11699">
    <property type="entry name" value="ALDEHYDE DEHYDROGENASE-RELATED"/>
    <property type="match status" value="1"/>
</dbReference>
<dbReference type="Pfam" id="PF00171">
    <property type="entry name" value="Aldedh"/>
    <property type="match status" value="1"/>
</dbReference>
<dbReference type="SUPFAM" id="SSF53720">
    <property type="entry name" value="ALDH-like"/>
    <property type="match status" value="1"/>
</dbReference>
<dbReference type="PROSITE" id="PS00070">
    <property type="entry name" value="ALDEHYDE_DEHYDR_CYS"/>
    <property type="match status" value="1"/>
</dbReference>
<dbReference type="PROSITE" id="PS00687">
    <property type="entry name" value="ALDEHYDE_DEHYDR_GLU"/>
    <property type="match status" value="1"/>
</dbReference>